<protein>
    <recommendedName>
        <fullName evidence="6">ATP synthase peripheral stalk subunit b, mitochondrial</fullName>
    </recommendedName>
    <alternativeName>
        <fullName evidence="6">ATP synthase F(0) complex subunit B1, mitochondrial</fullName>
    </alternativeName>
    <alternativeName>
        <fullName evidence="6">ATP synthase peripheral stalk-membrane subunit b</fullName>
    </alternativeName>
    <alternativeName>
        <fullName>ATP synthase subunit b</fullName>
        <shortName>ATPase subunit b</shortName>
    </alternativeName>
</protein>
<accession>Q5RFH9</accession>
<feature type="transit peptide" description="Mitochondrion" evidence="1">
    <location>
        <begin position="1"/>
        <end position="42"/>
    </location>
</feature>
<feature type="chain" id="PRO_0000002515" description="ATP synthase peripheral stalk subunit b, mitochondrial">
    <location>
        <begin position="43"/>
        <end position="256"/>
    </location>
</feature>
<feature type="modified residue" description="N6-succinyllysine" evidence="5">
    <location>
        <position position="131"/>
    </location>
</feature>
<feature type="modified residue" description="N6-acetyllysine" evidence="5">
    <location>
        <position position="139"/>
    </location>
</feature>
<feature type="modified residue" description="N6-acetyllysine" evidence="5">
    <location>
        <position position="154"/>
    </location>
</feature>
<feature type="modified residue" description="N6-acetyllysine" evidence="5">
    <location>
        <position position="162"/>
    </location>
</feature>
<feature type="modified residue" description="N6-acetyllysine" evidence="4">
    <location>
        <position position="221"/>
    </location>
</feature>
<feature type="modified residue" description="N6-acetyllysine" evidence="4">
    <location>
        <position position="233"/>
    </location>
</feature>
<feature type="modified residue" description="N6-acetyllysine" evidence="5">
    <location>
        <position position="244"/>
    </location>
</feature>
<comment type="function">
    <text evidence="2 3 4">Subunit b, of the mitochondrial membrane ATP synthase complex (F(1)F(0) ATP synthase or Complex V) that produces ATP from ADP in the presence of a proton gradient across the membrane which is generated by electron transport complexes of the respiratory chain. ATP synthase complex consist of a soluble F(1) head domain - the catalytic core - and a membrane F(1) domain - the membrane proton channel. These two domains are linked by a central stalk rotating inside the F(1) region and a stationary peripheral stalk. During catalysis, ATP synthesis in the catalytic domain of F(1) is coupled via a rotary mechanism of the central stalk subunits to proton translocation (By similarity). In vivo, can only synthesize ATP although its ATP hydrolase activity can be activated artificially in vitro (By similarity). Part of the complex F(0) domain (By similarity). Part of the complex F(0) domain and the peripheric stalk, which acts as a stator to hold the catalytic alpha(3)beta(3) subcomplex and subunit a/ATP6 static relative to the rotary elements (By similarity).</text>
</comment>
<comment type="subunit">
    <text evidence="4">Component of the ATP synthase complex composed at least of ATP5F1A/subunit alpha, ATP5F1B/subunit beta, ATP5MC1/subunit c (homooctomer), MT-ATP6/subunit a, MT-ATP8/subunit 8, ATP5ME/subunit e, ATP5MF/subunit f, ATP5MG/subunit g, ATP5MK/subunit k, ATP5MJ/subunit j, ATP5F1C/subunit gamma, ATP5F1D/subunit delta, ATP5F1E/subunit epsilon, ATP5PF/subunit F6, ATP5PB/subunit b, ATP5PD/subunit d, ATP5PO/subunit OSCP. ATP synthase complex consists of a soluble F(1) head domain (subunits alpha(3) and beta(3)) - the catalytic core - and a membrane F(0) domain - the membrane proton channel (subunits c, a, 8, e, f, g, k and j). These two domains are linked by a central stalk (subunits gamma, delta, and epsilon) rotating inside the F1 region and a stationary peripheral stalk (subunits F6, b, d, and OSCP).</text>
</comment>
<comment type="subcellular location">
    <subcellularLocation>
        <location evidence="1">Mitochondrion</location>
    </subcellularLocation>
    <subcellularLocation>
        <location evidence="1">Mitochondrion inner membrane</location>
    </subcellularLocation>
</comment>
<comment type="similarity">
    <text evidence="6">Belongs to the eukaryotic ATPase B chain family.</text>
</comment>
<keyword id="KW-0007">Acetylation</keyword>
<keyword id="KW-0138">CF(0)</keyword>
<keyword id="KW-0375">Hydrogen ion transport</keyword>
<keyword id="KW-0406">Ion transport</keyword>
<keyword id="KW-0472">Membrane</keyword>
<keyword id="KW-0496">Mitochondrion</keyword>
<keyword id="KW-0999">Mitochondrion inner membrane</keyword>
<keyword id="KW-1185">Reference proteome</keyword>
<keyword id="KW-0809">Transit peptide</keyword>
<keyword id="KW-0813">Transport</keyword>
<proteinExistence type="evidence at transcript level"/>
<gene>
    <name evidence="4" type="primary">ATP5PB</name>
    <name type="synonym">ATP5F1</name>
</gene>
<sequence>MLSRVVLSAAATAASSLKNAAFLGPGVLQATRTFHTGQPHLAPVPPLPEYGGKVRYGLIPEEFFQFLYPKTGVTGPYVLGTGLILYALSKEIYVISAETFTALSLIGVMVYGIKKYGPAVADFADKLNEQKLAQLEEAKQTSIQQIQNAIDMEKSQQALVQKRHYLFDVQRNNIAMALEVTYRERLYRVYKEVKNRLDYHIYVQNMMRQKEQEHMVNWVEKHVVQSISTQQEKETIAKCIADLKLLAKKAQAQPVM</sequence>
<reference key="1">
    <citation type="submission" date="2004-11" db="EMBL/GenBank/DDBJ databases">
        <authorList>
            <consortium name="The German cDNA consortium"/>
        </authorList>
    </citation>
    <scope>NUCLEOTIDE SEQUENCE [LARGE SCALE MRNA]</scope>
    <source>
        <tissue>Kidney</tissue>
    </source>
</reference>
<evidence type="ECO:0000250" key="1"/>
<evidence type="ECO:0000250" key="2">
    <source>
        <dbReference type="UniProtKB" id="P13619"/>
    </source>
</evidence>
<evidence type="ECO:0000250" key="3">
    <source>
        <dbReference type="UniProtKB" id="P19483"/>
    </source>
</evidence>
<evidence type="ECO:0000250" key="4">
    <source>
        <dbReference type="UniProtKB" id="P24539"/>
    </source>
</evidence>
<evidence type="ECO:0000250" key="5">
    <source>
        <dbReference type="UniProtKB" id="Q9CQQ7"/>
    </source>
</evidence>
<evidence type="ECO:0000305" key="6"/>
<name>AT5F1_PONAB</name>
<dbReference type="EMBL" id="CR857178">
    <property type="protein sequence ID" value="CAH89478.1"/>
    <property type="molecule type" value="mRNA"/>
</dbReference>
<dbReference type="RefSeq" id="NP_001124636.1">
    <property type="nucleotide sequence ID" value="NM_001131164.2"/>
</dbReference>
<dbReference type="SMR" id="Q5RFH9"/>
<dbReference type="FunCoup" id="Q5RFH9">
    <property type="interactions" value="2236"/>
</dbReference>
<dbReference type="STRING" id="9601.ENSPPYP00000001201"/>
<dbReference type="GeneID" id="100171475"/>
<dbReference type="KEGG" id="pon:100171475"/>
<dbReference type="CTD" id="515"/>
<dbReference type="eggNOG" id="KOG3976">
    <property type="taxonomic scope" value="Eukaryota"/>
</dbReference>
<dbReference type="InParanoid" id="Q5RFH9"/>
<dbReference type="OrthoDB" id="67388at2759"/>
<dbReference type="Proteomes" id="UP000001595">
    <property type="component" value="Unplaced"/>
</dbReference>
<dbReference type="GO" id="GO:0005743">
    <property type="term" value="C:mitochondrial inner membrane"/>
    <property type="evidence" value="ECO:0007669"/>
    <property type="project" value="UniProtKB-SubCell"/>
</dbReference>
<dbReference type="GO" id="GO:0045259">
    <property type="term" value="C:proton-transporting ATP synthase complex"/>
    <property type="evidence" value="ECO:0000250"/>
    <property type="project" value="UniProtKB"/>
</dbReference>
<dbReference type="GO" id="GO:0046933">
    <property type="term" value="F:proton-transporting ATP synthase activity, rotational mechanism"/>
    <property type="evidence" value="ECO:0007669"/>
    <property type="project" value="TreeGrafter"/>
</dbReference>
<dbReference type="FunFam" id="1.20.5.2210:FF:000001">
    <property type="entry name" value="ATP synthase F(0) complex subunit B1, mitochondrial"/>
    <property type="match status" value="1"/>
</dbReference>
<dbReference type="Gene3D" id="1.20.5.2210">
    <property type="match status" value="1"/>
</dbReference>
<dbReference type="InterPro" id="IPR008688">
    <property type="entry name" value="ATP_synth_Bsub_B/MI25"/>
</dbReference>
<dbReference type="InterPro" id="IPR013837">
    <property type="entry name" value="ATP_synth_F0_suB"/>
</dbReference>
<dbReference type="PANTHER" id="PTHR12733:SF3">
    <property type="entry name" value="ATP SYNTHASE F(0) COMPLEX SUBUNIT B1, MITOCHONDRIAL"/>
    <property type="match status" value="1"/>
</dbReference>
<dbReference type="PANTHER" id="PTHR12733">
    <property type="entry name" value="MITOCHONDRIAL ATP SYNTHASE B CHAIN"/>
    <property type="match status" value="1"/>
</dbReference>
<dbReference type="Pfam" id="PF05405">
    <property type="entry name" value="Mt_ATP-synt_B"/>
    <property type="match status" value="1"/>
</dbReference>
<dbReference type="SUPFAM" id="SSF161060">
    <property type="entry name" value="ATP synthase B chain-like"/>
    <property type="match status" value="1"/>
</dbReference>
<organism>
    <name type="scientific">Pongo abelii</name>
    <name type="common">Sumatran orangutan</name>
    <name type="synonym">Pongo pygmaeus abelii</name>
    <dbReference type="NCBI Taxonomy" id="9601"/>
    <lineage>
        <taxon>Eukaryota</taxon>
        <taxon>Metazoa</taxon>
        <taxon>Chordata</taxon>
        <taxon>Craniata</taxon>
        <taxon>Vertebrata</taxon>
        <taxon>Euteleostomi</taxon>
        <taxon>Mammalia</taxon>
        <taxon>Eutheria</taxon>
        <taxon>Euarchontoglires</taxon>
        <taxon>Primates</taxon>
        <taxon>Haplorrhini</taxon>
        <taxon>Catarrhini</taxon>
        <taxon>Hominidae</taxon>
        <taxon>Pongo</taxon>
    </lineage>
</organism>